<protein>
    <recommendedName>
        <fullName>Mediator of RNA polymerase II transcription subunit 31</fullName>
    </recommendedName>
    <alternativeName>
        <fullName>Mediator complex subunit 31</fullName>
    </alternativeName>
</protein>
<dbReference type="EMBL" id="AACD01000042">
    <property type="protein sequence ID" value="EAA63980.1"/>
    <property type="molecule type" value="Genomic_DNA"/>
</dbReference>
<dbReference type="EMBL" id="BN001307">
    <property type="protein sequence ID" value="CBF86968.1"/>
    <property type="molecule type" value="Genomic_DNA"/>
</dbReference>
<dbReference type="RefSeq" id="XP_660099.1">
    <property type="nucleotide sequence ID" value="XM_655007.1"/>
</dbReference>
<dbReference type="SMR" id="Q5BAD5"/>
<dbReference type="FunCoup" id="Q5BAD5">
    <property type="interactions" value="76"/>
</dbReference>
<dbReference type="STRING" id="227321.Q5BAD5"/>
<dbReference type="EnsemblFungi" id="CBF86968">
    <property type="protein sequence ID" value="CBF86968"/>
    <property type="gene ID" value="ANIA_02495"/>
</dbReference>
<dbReference type="KEGG" id="ani:ANIA_02495"/>
<dbReference type="VEuPathDB" id="FungiDB:AN2495"/>
<dbReference type="eggNOG" id="KOG4086">
    <property type="taxonomic scope" value="Eukaryota"/>
</dbReference>
<dbReference type="HOGENOM" id="CLU_071681_1_0_1"/>
<dbReference type="InParanoid" id="Q5BAD5"/>
<dbReference type="OMA" id="NPHYISH"/>
<dbReference type="OrthoDB" id="10257739at2759"/>
<dbReference type="Proteomes" id="UP000000560">
    <property type="component" value="Chromosome VII"/>
</dbReference>
<dbReference type="GO" id="GO:0070847">
    <property type="term" value="C:core mediator complex"/>
    <property type="evidence" value="ECO:0000318"/>
    <property type="project" value="GO_Central"/>
</dbReference>
<dbReference type="GO" id="GO:0016592">
    <property type="term" value="C:mediator complex"/>
    <property type="evidence" value="ECO:0000318"/>
    <property type="project" value="GO_Central"/>
</dbReference>
<dbReference type="GO" id="GO:0003712">
    <property type="term" value="F:transcription coregulator activity"/>
    <property type="evidence" value="ECO:0007669"/>
    <property type="project" value="InterPro"/>
</dbReference>
<dbReference type="GO" id="GO:0006357">
    <property type="term" value="P:regulation of transcription by RNA polymerase II"/>
    <property type="evidence" value="ECO:0000318"/>
    <property type="project" value="GO_Central"/>
</dbReference>
<dbReference type="FunFam" id="1.10.10.1340:FF:000002">
    <property type="entry name" value="Mediator of RNA polymerase II transcription subunit 31"/>
    <property type="match status" value="1"/>
</dbReference>
<dbReference type="Gene3D" id="1.10.10.1340">
    <property type="entry name" value="Mediator of RNA polymerase II, submodule Med31 (Soh1)"/>
    <property type="match status" value="1"/>
</dbReference>
<dbReference type="InterPro" id="IPR038089">
    <property type="entry name" value="Med31_sf"/>
</dbReference>
<dbReference type="InterPro" id="IPR008831">
    <property type="entry name" value="Mediator_Med31"/>
</dbReference>
<dbReference type="PANTHER" id="PTHR13186">
    <property type="entry name" value="MEDIATOR OF RNA POLYMERASE II TRANSCRIPTION SUBUNIT 31"/>
    <property type="match status" value="1"/>
</dbReference>
<dbReference type="Pfam" id="PF05669">
    <property type="entry name" value="Med31"/>
    <property type="match status" value="1"/>
</dbReference>
<feature type="chain" id="PRO_0000305724" description="Mediator of RNA polymerase II transcription subunit 31">
    <location>
        <begin position="1"/>
        <end position="158"/>
    </location>
</feature>
<feature type="region of interest" description="Disordered" evidence="2">
    <location>
        <begin position="130"/>
        <end position="158"/>
    </location>
</feature>
<comment type="function">
    <text evidence="1">Component of the Mediator complex, a coactivator involved in the regulated transcription of nearly all RNA polymerase II-dependent genes. Mediator functions as a bridge to convey information from gene-specific regulatory proteins to the basal RNA polymerase II transcription machinery. Mediator is recruited to promoters by direct interactions with regulatory proteins and serves as a scaffold for the assembly of a functional preinitiation complex with RNA polymerase II and the general transcription factors (By similarity).</text>
</comment>
<comment type="subunit">
    <text evidence="1">Component of the Mediator complex.</text>
</comment>
<comment type="subcellular location">
    <subcellularLocation>
        <location evidence="1">Nucleus</location>
    </subcellularLocation>
</comment>
<comment type="similarity">
    <text evidence="3">Belongs to the Mediator complex subunit 31 family.</text>
</comment>
<evidence type="ECO:0000250" key="1"/>
<evidence type="ECO:0000256" key="2">
    <source>
        <dbReference type="SAM" id="MobiDB-lite"/>
    </source>
</evidence>
<evidence type="ECO:0000305" key="3"/>
<proteinExistence type="inferred from homology"/>
<reference key="1">
    <citation type="journal article" date="2005" name="Nature">
        <title>Sequencing of Aspergillus nidulans and comparative analysis with A. fumigatus and A. oryzae.</title>
        <authorList>
            <person name="Galagan J.E."/>
            <person name="Calvo S.E."/>
            <person name="Cuomo C."/>
            <person name="Ma L.-J."/>
            <person name="Wortman J.R."/>
            <person name="Batzoglou S."/>
            <person name="Lee S.-I."/>
            <person name="Bastuerkmen M."/>
            <person name="Spevak C.C."/>
            <person name="Clutterbuck J."/>
            <person name="Kapitonov V."/>
            <person name="Jurka J."/>
            <person name="Scazzocchio C."/>
            <person name="Farman M.L."/>
            <person name="Butler J."/>
            <person name="Purcell S."/>
            <person name="Harris S."/>
            <person name="Braus G.H."/>
            <person name="Draht O."/>
            <person name="Busch S."/>
            <person name="D'Enfert C."/>
            <person name="Bouchier C."/>
            <person name="Goldman G.H."/>
            <person name="Bell-Pedersen D."/>
            <person name="Griffiths-Jones S."/>
            <person name="Doonan J.H."/>
            <person name="Yu J."/>
            <person name="Vienken K."/>
            <person name="Pain A."/>
            <person name="Freitag M."/>
            <person name="Selker E.U."/>
            <person name="Archer D.B."/>
            <person name="Penalva M.A."/>
            <person name="Oakley B.R."/>
            <person name="Momany M."/>
            <person name="Tanaka T."/>
            <person name="Kumagai T."/>
            <person name="Asai K."/>
            <person name="Machida M."/>
            <person name="Nierman W.C."/>
            <person name="Denning D.W."/>
            <person name="Caddick M.X."/>
            <person name="Hynes M."/>
            <person name="Paoletti M."/>
            <person name="Fischer R."/>
            <person name="Miller B.L."/>
            <person name="Dyer P.S."/>
            <person name="Sachs M.S."/>
            <person name="Osmani S.A."/>
            <person name="Birren B.W."/>
        </authorList>
    </citation>
    <scope>NUCLEOTIDE SEQUENCE [LARGE SCALE GENOMIC DNA]</scope>
    <source>
        <strain>FGSC A4 / ATCC 38163 / CBS 112.46 / NRRL 194 / M139</strain>
    </source>
</reference>
<reference key="2">
    <citation type="journal article" date="2009" name="Fungal Genet. Biol.">
        <title>The 2008 update of the Aspergillus nidulans genome annotation: a community effort.</title>
        <authorList>
            <person name="Wortman J.R."/>
            <person name="Gilsenan J.M."/>
            <person name="Joardar V."/>
            <person name="Deegan J."/>
            <person name="Clutterbuck J."/>
            <person name="Andersen M.R."/>
            <person name="Archer D."/>
            <person name="Bencina M."/>
            <person name="Braus G."/>
            <person name="Coutinho P."/>
            <person name="von Dohren H."/>
            <person name="Doonan J."/>
            <person name="Driessen A.J."/>
            <person name="Durek P."/>
            <person name="Espeso E."/>
            <person name="Fekete E."/>
            <person name="Flipphi M."/>
            <person name="Estrada C.G."/>
            <person name="Geysens S."/>
            <person name="Goldman G."/>
            <person name="de Groot P.W."/>
            <person name="Hansen K."/>
            <person name="Harris S.D."/>
            <person name="Heinekamp T."/>
            <person name="Helmstaedt K."/>
            <person name="Henrissat B."/>
            <person name="Hofmann G."/>
            <person name="Homan T."/>
            <person name="Horio T."/>
            <person name="Horiuchi H."/>
            <person name="James S."/>
            <person name="Jones M."/>
            <person name="Karaffa L."/>
            <person name="Karanyi Z."/>
            <person name="Kato M."/>
            <person name="Keller N."/>
            <person name="Kelly D.E."/>
            <person name="Kiel J.A."/>
            <person name="Kim J.M."/>
            <person name="van der Klei I.J."/>
            <person name="Klis F.M."/>
            <person name="Kovalchuk A."/>
            <person name="Krasevec N."/>
            <person name="Kubicek C.P."/>
            <person name="Liu B."/>
            <person name="Maccabe A."/>
            <person name="Meyer V."/>
            <person name="Mirabito P."/>
            <person name="Miskei M."/>
            <person name="Mos M."/>
            <person name="Mullins J."/>
            <person name="Nelson D.R."/>
            <person name="Nielsen J."/>
            <person name="Oakley B.R."/>
            <person name="Osmani S.A."/>
            <person name="Pakula T."/>
            <person name="Paszewski A."/>
            <person name="Paulsen I."/>
            <person name="Pilsyk S."/>
            <person name="Pocsi I."/>
            <person name="Punt P.J."/>
            <person name="Ram A.F."/>
            <person name="Ren Q."/>
            <person name="Robellet X."/>
            <person name="Robson G."/>
            <person name="Seiboth B."/>
            <person name="van Solingen P."/>
            <person name="Specht T."/>
            <person name="Sun J."/>
            <person name="Taheri-Talesh N."/>
            <person name="Takeshita N."/>
            <person name="Ussery D."/>
            <person name="vanKuyk P.A."/>
            <person name="Visser H."/>
            <person name="van de Vondervoort P.J."/>
            <person name="de Vries R.P."/>
            <person name="Walton J."/>
            <person name="Xiang X."/>
            <person name="Xiong Y."/>
            <person name="Zeng A.P."/>
            <person name="Brandt B.W."/>
            <person name="Cornell M.J."/>
            <person name="van den Hondel C.A."/>
            <person name="Visser J."/>
            <person name="Oliver S.G."/>
            <person name="Turner G."/>
        </authorList>
    </citation>
    <scope>GENOME REANNOTATION</scope>
    <source>
        <strain>FGSC A4 / ATCC 38163 / CBS 112.46 / NRRL 194 / M139</strain>
    </source>
</reference>
<organism>
    <name type="scientific">Emericella nidulans (strain FGSC A4 / ATCC 38163 / CBS 112.46 / NRRL 194 / M139)</name>
    <name type="common">Aspergillus nidulans</name>
    <dbReference type="NCBI Taxonomy" id="227321"/>
    <lineage>
        <taxon>Eukaryota</taxon>
        <taxon>Fungi</taxon>
        <taxon>Dikarya</taxon>
        <taxon>Ascomycota</taxon>
        <taxon>Pezizomycotina</taxon>
        <taxon>Eurotiomycetes</taxon>
        <taxon>Eurotiomycetidae</taxon>
        <taxon>Eurotiales</taxon>
        <taxon>Aspergillaceae</taxon>
        <taxon>Aspergillus</taxon>
        <taxon>Aspergillus subgen. Nidulantes</taxon>
    </lineage>
</organism>
<sequence length="158" mass="17669">MAQPQNDQAQPPPATLTNPRFTLELEFVSSLANPYYLSHLAVNYPSLLGISKSGNENEVNDDNSDPDAEAFAAYLAYLYSYWKTPEYSQFLTHPGATLRALRLLQEEKFRRDIIRPQVIERLAGVDLNGEQSAAEAGEQNTEQNKGDRGNVENQHGKT</sequence>
<name>MED31_EMENI</name>
<accession>Q5BAD5</accession>
<accession>C8VPH2</accession>
<keyword id="KW-0010">Activator</keyword>
<keyword id="KW-0539">Nucleus</keyword>
<keyword id="KW-1185">Reference proteome</keyword>
<keyword id="KW-0804">Transcription</keyword>
<keyword id="KW-0805">Transcription regulation</keyword>
<gene>
    <name type="primary">soh1</name>
    <name type="synonym">med31</name>
    <name type="ORF">AN2495</name>
</gene>